<proteinExistence type="evidence at protein level"/>
<dbReference type="EC" id="4.6.1.18"/>
<dbReference type="PIR" id="A00832">
    <property type="entry name" value="NROW2"/>
</dbReference>
<dbReference type="SMR" id="P00685"/>
<dbReference type="GlyCosmos" id="P00685">
    <property type="glycosylation" value="1 site, No reported glycans"/>
</dbReference>
<dbReference type="iPTMnet" id="P00685"/>
<dbReference type="HOGENOM" id="CLU_117006_0_0_1"/>
<dbReference type="TreeFam" id="TF333393"/>
<dbReference type="GO" id="GO:0005576">
    <property type="term" value="C:extracellular region"/>
    <property type="evidence" value="ECO:0007669"/>
    <property type="project" value="UniProtKB-SubCell"/>
</dbReference>
<dbReference type="GO" id="GO:0016829">
    <property type="term" value="F:lyase activity"/>
    <property type="evidence" value="ECO:0007669"/>
    <property type="project" value="UniProtKB-KW"/>
</dbReference>
<dbReference type="GO" id="GO:0003676">
    <property type="term" value="F:nucleic acid binding"/>
    <property type="evidence" value="ECO:0007669"/>
    <property type="project" value="InterPro"/>
</dbReference>
<dbReference type="GO" id="GO:0004522">
    <property type="term" value="F:ribonuclease A activity"/>
    <property type="evidence" value="ECO:0007669"/>
    <property type="project" value="UniProtKB-EC"/>
</dbReference>
<dbReference type="GO" id="GO:0050830">
    <property type="term" value="P:defense response to Gram-positive bacterium"/>
    <property type="evidence" value="ECO:0007669"/>
    <property type="project" value="TreeGrafter"/>
</dbReference>
<dbReference type="CDD" id="cd06265">
    <property type="entry name" value="RNase_A_canonical"/>
    <property type="match status" value="1"/>
</dbReference>
<dbReference type="FunFam" id="3.10.130.10:FF:000001">
    <property type="entry name" value="Ribonuclease pancreatic"/>
    <property type="match status" value="1"/>
</dbReference>
<dbReference type="Gene3D" id="3.10.130.10">
    <property type="entry name" value="Ribonuclease A-like domain"/>
    <property type="match status" value="1"/>
</dbReference>
<dbReference type="InterPro" id="IPR001427">
    <property type="entry name" value="RNaseA"/>
</dbReference>
<dbReference type="InterPro" id="IPR036816">
    <property type="entry name" value="RNaseA-like_dom_sf"/>
</dbReference>
<dbReference type="InterPro" id="IPR023411">
    <property type="entry name" value="RNaseA_AS"/>
</dbReference>
<dbReference type="InterPro" id="IPR023412">
    <property type="entry name" value="RNaseA_domain"/>
</dbReference>
<dbReference type="PANTHER" id="PTHR11437">
    <property type="entry name" value="RIBONUCLEASE"/>
    <property type="match status" value="1"/>
</dbReference>
<dbReference type="PANTHER" id="PTHR11437:SF24">
    <property type="entry name" value="RIBONUCLEASE PANCREATIC"/>
    <property type="match status" value="1"/>
</dbReference>
<dbReference type="Pfam" id="PF00074">
    <property type="entry name" value="RnaseA"/>
    <property type="match status" value="1"/>
</dbReference>
<dbReference type="PRINTS" id="PR00794">
    <property type="entry name" value="RIBONUCLEASE"/>
</dbReference>
<dbReference type="SMART" id="SM00092">
    <property type="entry name" value="RNAse_Pc"/>
    <property type="match status" value="1"/>
</dbReference>
<dbReference type="SUPFAM" id="SSF54076">
    <property type="entry name" value="RNase A-like"/>
    <property type="match status" value="1"/>
</dbReference>
<dbReference type="PROSITE" id="PS00127">
    <property type="entry name" value="RNASE_PANCREATIC"/>
    <property type="match status" value="1"/>
</dbReference>
<keyword id="KW-0903">Direct protein sequencing</keyword>
<keyword id="KW-1015">Disulfide bond</keyword>
<keyword id="KW-0255">Endonuclease</keyword>
<keyword id="KW-0325">Glycoprotein</keyword>
<keyword id="KW-0378">Hydrolase</keyword>
<keyword id="KW-0456">Lyase</keyword>
<keyword id="KW-0540">Nuclease</keyword>
<keyword id="KW-0964">Secreted</keyword>
<reference key="1">
    <citation type="journal article" date="1980" name="Eur. J. Biochem.">
        <title>Pancreatic ribonucleases of mammals with ruminant-like digestion. Amino-acid sequences of hippopotamus and sloth ribonucleases.</title>
        <authorList>
            <person name="Havinga J."/>
            <person name="Beintema J.J."/>
        </authorList>
    </citation>
    <scope>PROTEIN SEQUENCE</scope>
    <scope>GLYCOSYLATION AT ASN-34</scope>
    <source>
        <tissue>Pancreas</tissue>
    </source>
</reference>
<evidence type="ECO:0000250" key="1"/>
<evidence type="ECO:0000256" key="2">
    <source>
        <dbReference type="SAM" id="MobiDB-lite"/>
    </source>
</evidence>
<evidence type="ECO:0000269" key="3">
    <source>
    </source>
</evidence>
<evidence type="ECO:0000305" key="4"/>
<gene>
    <name type="primary">RNASE1</name>
    <name type="synonym">RNS1</name>
</gene>
<organism>
    <name type="scientific">Choloepus hoffmanni</name>
    <name type="common">Hoffmann's two-fingered sloth</name>
    <dbReference type="NCBI Taxonomy" id="9358"/>
    <lineage>
        <taxon>Eukaryota</taxon>
        <taxon>Metazoa</taxon>
        <taxon>Chordata</taxon>
        <taxon>Craniata</taxon>
        <taxon>Vertebrata</taxon>
        <taxon>Euteleostomi</taxon>
        <taxon>Mammalia</taxon>
        <taxon>Eutheria</taxon>
        <taxon>Xenarthra</taxon>
        <taxon>Pilosa</taxon>
        <taxon>Folivora</taxon>
        <taxon>Megalonychidae</taxon>
        <taxon>Choloepus</taxon>
    </lineage>
</organism>
<accession>P00685</accession>
<feature type="chain" id="PRO_0000057192" description="Ribonuclease pancreatic">
    <location>
        <begin position="1"/>
        <end position="128"/>
    </location>
</feature>
<feature type="region of interest" description="Disordered" evidence="2">
    <location>
        <begin position="1"/>
        <end position="20"/>
    </location>
</feature>
<feature type="active site" description="Proton acceptor" evidence="1">
    <location>
        <position position="12"/>
    </location>
</feature>
<feature type="active site" description="Proton donor" evidence="1">
    <location>
        <position position="119"/>
    </location>
</feature>
<feature type="binding site" evidence="1">
    <location>
        <position position="7"/>
    </location>
    <ligand>
        <name>substrate</name>
    </ligand>
</feature>
<feature type="binding site" evidence="1">
    <location>
        <position position="10"/>
    </location>
    <ligand>
        <name>substrate</name>
    </ligand>
</feature>
<feature type="binding site" evidence="1">
    <location>
        <begin position="41"/>
        <end position="45"/>
    </location>
    <ligand>
        <name>substrate</name>
    </ligand>
</feature>
<feature type="binding site" evidence="1">
    <location>
        <position position="66"/>
    </location>
    <ligand>
        <name>substrate</name>
    </ligand>
</feature>
<feature type="binding site" evidence="1">
    <location>
        <position position="85"/>
    </location>
    <ligand>
        <name>substrate</name>
    </ligand>
</feature>
<feature type="glycosylation site" description="N-linked (GlcNAc...) asparagine" evidence="3">
    <location>
        <position position="34"/>
    </location>
</feature>
<feature type="disulfide bond" evidence="1">
    <location>
        <begin position="26"/>
        <end position="84"/>
    </location>
</feature>
<feature type="disulfide bond" evidence="1">
    <location>
        <begin position="40"/>
        <end position="95"/>
    </location>
</feature>
<feature type="disulfide bond" evidence="1">
    <location>
        <begin position="58"/>
        <end position="110"/>
    </location>
</feature>
<feature type="disulfide bond" evidence="1">
    <location>
        <begin position="65"/>
        <end position="72"/>
    </location>
</feature>
<comment type="function">
    <text evidence="1">Endonuclease that catalyzes the cleavage of RNA on the 3' side of pyrimidine nucleotides. Acts on single-stranded and double-stranded RNA (By similarity).</text>
</comment>
<comment type="catalytic activity">
    <reaction>
        <text>an [RNA] containing cytidine + H2O = an [RNA]-3'-cytidine-3'-phosphate + a 5'-hydroxy-ribonucleotide-3'-[RNA].</text>
        <dbReference type="EC" id="4.6.1.18"/>
    </reaction>
</comment>
<comment type="catalytic activity">
    <reaction>
        <text>an [RNA] containing uridine + H2O = an [RNA]-3'-uridine-3'-phosphate + a 5'-hydroxy-ribonucleotide-3'-[RNA].</text>
        <dbReference type="EC" id="4.6.1.18"/>
    </reaction>
</comment>
<comment type="subunit">
    <text evidence="1">Monomer. Interacts with and forms tight 1:1 complexes with RNH1. Dimerization of two such complexes may occur. Interaction with RNH1 inhibits this protein (By similarity).</text>
</comment>
<comment type="subcellular location">
    <subcellularLocation>
        <location>Secreted</location>
    </subcellularLocation>
</comment>
<comment type="tissue specificity">
    <text>Pancreas.</text>
</comment>
<comment type="similarity">
    <text evidence="4">Belongs to the pancreatic ribonuclease family.</text>
</comment>
<sequence length="128" mass="14492">KETAAMKFQRQHMDSGSSLSSSSDYCNKMMKVRNMTQESCKPVNTFVHESLQDVQAVCFQENVTCKNGQQNCHQSRSNMHITDCRQTSGSKYPNCLYQTSNMNRHIIIACEGNPYVPVHFDASVEDST</sequence>
<name>RNAS1_CHOHO</name>
<protein>
    <recommendedName>
        <fullName>Ribonuclease pancreatic</fullName>
        <ecNumber>4.6.1.18</ecNumber>
    </recommendedName>
    <alternativeName>
        <fullName>RNase 1</fullName>
    </alternativeName>
    <alternativeName>
        <fullName>RNase A</fullName>
    </alternativeName>
</protein>